<gene>
    <name type="ORF">DDB_G0279265</name>
</gene>
<comment type="function">
    <text evidence="1">Core component of the CTLH E3 ubiquitin-protein ligase complex that mediates ubiquitination and subsequent proteasomal degradation of target proteins. Acts as a positive regulator of Wnt signaling pathway by promoting beta-catenin (CTNNB1) nuclear accumulation.</text>
</comment>
<comment type="subcellular location">
    <subcellularLocation>
        <location evidence="1">Cytoplasm</location>
    </subcellularLocation>
    <subcellularLocation>
        <location evidence="1">Nucleus</location>
    </subcellularLocation>
</comment>
<comment type="similarity">
    <text evidence="4">Belongs to the GID8 family.</text>
</comment>
<name>GID8_DICDI</name>
<accession>Q54X16</accession>
<dbReference type="EMBL" id="AAFI02000030">
    <property type="protein sequence ID" value="EAL67781.2"/>
    <property type="molecule type" value="Genomic_DNA"/>
</dbReference>
<dbReference type="RefSeq" id="XP_641761.2">
    <property type="nucleotide sequence ID" value="XM_636669.2"/>
</dbReference>
<dbReference type="SMR" id="Q54X16"/>
<dbReference type="FunCoup" id="Q54X16">
    <property type="interactions" value="879"/>
</dbReference>
<dbReference type="STRING" id="44689.Q54X16"/>
<dbReference type="PaxDb" id="44689-DDB0305011"/>
<dbReference type="EnsemblProtists" id="EAL67781">
    <property type="protein sequence ID" value="EAL67781"/>
    <property type="gene ID" value="DDB_G0279265"/>
</dbReference>
<dbReference type="GeneID" id="8621959"/>
<dbReference type="KEGG" id="ddi:DDB_G0279265"/>
<dbReference type="dictyBase" id="DDB_G0279265"/>
<dbReference type="VEuPathDB" id="AmoebaDB:DDB_G0279265"/>
<dbReference type="eggNOG" id="KOG2659">
    <property type="taxonomic scope" value="Eukaryota"/>
</dbReference>
<dbReference type="HOGENOM" id="CLU_073203_1_0_1"/>
<dbReference type="InParanoid" id="Q54X16"/>
<dbReference type="OMA" id="KMILWAQ"/>
<dbReference type="PhylomeDB" id="Q54X16"/>
<dbReference type="Reactome" id="R-DDI-9861718">
    <property type="pathway name" value="Regulation of pyruvate metabolism"/>
</dbReference>
<dbReference type="PRO" id="PR:Q54X16"/>
<dbReference type="Proteomes" id="UP000002195">
    <property type="component" value="Chromosome 3"/>
</dbReference>
<dbReference type="GO" id="GO:0005737">
    <property type="term" value="C:cytoplasm"/>
    <property type="evidence" value="ECO:0000318"/>
    <property type="project" value="GO_Central"/>
</dbReference>
<dbReference type="GO" id="GO:0005634">
    <property type="term" value="C:nucleus"/>
    <property type="evidence" value="ECO:0000318"/>
    <property type="project" value="GO_Central"/>
</dbReference>
<dbReference type="GO" id="GO:0043161">
    <property type="term" value="P:proteasome-mediated ubiquitin-dependent protein catabolic process"/>
    <property type="evidence" value="ECO:0000318"/>
    <property type="project" value="GO_Central"/>
</dbReference>
<dbReference type="GO" id="GO:0016055">
    <property type="term" value="P:Wnt signaling pathway"/>
    <property type="evidence" value="ECO:0007669"/>
    <property type="project" value="UniProtKB-KW"/>
</dbReference>
<dbReference type="Gene3D" id="1.20.960.30">
    <property type="match status" value="1"/>
</dbReference>
<dbReference type="InterPro" id="IPR013144">
    <property type="entry name" value="CRA_dom"/>
</dbReference>
<dbReference type="InterPro" id="IPR024964">
    <property type="entry name" value="CTLH/CRA"/>
</dbReference>
<dbReference type="InterPro" id="IPR006595">
    <property type="entry name" value="CTLH_C"/>
</dbReference>
<dbReference type="InterPro" id="IPR006594">
    <property type="entry name" value="LisH"/>
</dbReference>
<dbReference type="InterPro" id="IPR050618">
    <property type="entry name" value="Ubq-SigPath_Reg"/>
</dbReference>
<dbReference type="PANTHER" id="PTHR12864">
    <property type="entry name" value="RAN BINDING PROTEIN 9-RELATED"/>
    <property type="match status" value="1"/>
</dbReference>
<dbReference type="Pfam" id="PF10607">
    <property type="entry name" value="CTLH"/>
    <property type="match status" value="1"/>
</dbReference>
<dbReference type="Pfam" id="PF08513">
    <property type="entry name" value="LisH"/>
    <property type="match status" value="1"/>
</dbReference>
<dbReference type="SMART" id="SM00757">
    <property type="entry name" value="CRA"/>
    <property type="match status" value="1"/>
</dbReference>
<dbReference type="SMART" id="SM00668">
    <property type="entry name" value="CTLH"/>
    <property type="match status" value="1"/>
</dbReference>
<dbReference type="SMART" id="SM00667">
    <property type="entry name" value="LisH"/>
    <property type="match status" value="1"/>
</dbReference>
<dbReference type="PROSITE" id="PS50897">
    <property type="entry name" value="CTLH"/>
    <property type="match status" value="1"/>
</dbReference>
<dbReference type="PROSITE" id="PS50896">
    <property type="entry name" value="LISH"/>
    <property type="match status" value="1"/>
</dbReference>
<organism>
    <name type="scientific">Dictyostelium discoideum</name>
    <name type="common">Social amoeba</name>
    <dbReference type="NCBI Taxonomy" id="44689"/>
    <lineage>
        <taxon>Eukaryota</taxon>
        <taxon>Amoebozoa</taxon>
        <taxon>Evosea</taxon>
        <taxon>Eumycetozoa</taxon>
        <taxon>Dictyostelia</taxon>
        <taxon>Dictyosteliales</taxon>
        <taxon>Dictyosteliaceae</taxon>
        <taxon>Dictyostelium</taxon>
    </lineage>
</organism>
<reference key="1">
    <citation type="journal article" date="2005" name="Nature">
        <title>The genome of the social amoeba Dictyostelium discoideum.</title>
        <authorList>
            <person name="Eichinger L."/>
            <person name="Pachebat J.A."/>
            <person name="Gloeckner G."/>
            <person name="Rajandream M.A."/>
            <person name="Sucgang R."/>
            <person name="Berriman M."/>
            <person name="Song J."/>
            <person name="Olsen R."/>
            <person name="Szafranski K."/>
            <person name="Xu Q."/>
            <person name="Tunggal B."/>
            <person name="Kummerfeld S."/>
            <person name="Madera M."/>
            <person name="Konfortov B.A."/>
            <person name="Rivero F."/>
            <person name="Bankier A.T."/>
            <person name="Lehmann R."/>
            <person name="Hamlin N."/>
            <person name="Davies R."/>
            <person name="Gaudet P."/>
            <person name="Fey P."/>
            <person name="Pilcher K."/>
            <person name="Chen G."/>
            <person name="Saunders D."/>
            <person name="Sodergren E.J."/>
            <person name="Davis P."/>
            <person name="Kerhornou A."/>
            <person name="Nie X."/>
            <person name="Hall N."/>
            <person name="Anjard C."/>
            <person name="Hemphill L."/>
            <person name="Bason N."/>
            <person name="Farbrother P."/>
            <person name="Desany B."/>
            <person name="Just E."/>
            <person name="Morio T."/>
            <person name="Rost R."/>
            <person name="Churcher C.M."/>
            <person name="Cooper J."/>
            <person name="Haydock S."/>
            <person name="van Driessche N."/>
            <person name="Cronin A."/>
            <person name="Goodhead I."/>
            <person name="Muzny D.M."/>
            <person name="Mourier T."/>
            <person name="Pain A."/>
            <person name="Lu M."/>
            <person name="Harper D."/>
            <person name="Lindsay R."/>
            <person name="Hauser H."/>
            <person name="James K.D."/>
            <person name="Quiles M."/>
            <person name="Madan Babu M."/>
            <person name="Saito T."/>
            <person name="Buchrieser C."/>
            <person name="Wardroper A."/>
            <person name="Felder M."/>
            <person name="Thangavelu M."/>
            <person name="Johnson D."/>
            <person name="Knights A."/>
            <person name="Loulseged H."/>
            <person name="Mungall K.L."/>
            <person name="Oliver K."/>
            <person name="Price C."/>
            <person name="Quail M.A."/>
            <person name="Urushihara H."/>
            <person name="Hernandez J."/>
            <person name="Rabbinowitsch E."/>
            <person name="Steffen D."/>
            <person name="Sanders M."/>
            <person name="Ma J."/>
            <person name="Kohara Y."/>
            <person name="Sharp S."/>
            <person name="Simmonds M.N."/>
            <person name="Spiegler S."/>
            <person name="Tivey A."/>
            <person name="Sugano S."/>
            <person name="White B."/>
            <person name="Walker D."/>
            <person name="Woodward J.R."/>
            <person name="Winckler T."/>
            <person name="Tanaka Y."/>
            <person name="Shaulsky G."/>
            <person name="Schleicher M."/>
            <person name="Weinstock G.M."/>
            <person name="Rosenthal A."/>
            <person name="Cox E.C."/>
            <person name="Chisholm R.L."/>
            <person name="Gibbs R.A."/>
            <person name="Loomis W.F."/>
            <person name="Platzer M."/>
            <person name="Kay R.R."/>
            <person name="Williams J.G."/>
            <person name="Dear P.H."/>
            <person name="Noegel A.A."/>
            <person name="Barrell B.G."/>
            <person name="Kuspa A."/>
        </authorList>
    </citation>
    <scope>NUCLEOTIDE SEQUENCE [LARGE SCALE GENOMIC DNA]</scope>
    <source>
        <strain>AX4</strain>
    </source>
</reference>
<feature type="chain" id="PRO_0000328507" description="Glucose-induced degradation protein 8 homolog">
    <location>
        <begin position="1"/>
        <end position="228"/>
    </location>
</feature>
<feature type="domain" description="LisH" evidence="3">
    <location>
        <begin position="29"/>
        <end position="61"/>
    </location>
</feature>
<feature type="domain" description="CTLH" evidence="2">
    <location>
        <begin position="67"/>
        <end position="124"/>
    </location>
</feature>
<sequence>MSNSYSSNAQKKVISTSEWDDKLAEVNISKSDLNKLVMNYLVIEGYQEAAAKFQEESSTQTTVDLASIADRMAIRSAIQCGDVEKGIEIVNDLNPEILDTNPQLYFHLQQQKLIELIRKGMTAEALKFAQDELAPQGEENNKFLEELEKTISLLVFEDTAKSPLSSLLDHSQRQKTAGELNSAILLSQSQDKDPKLPTILKLLKWAQTQLDSKCIYPKITNTVTGEYE</sequence>
<keyword id="KW-0963">Cytoplasm</keyword>
<keyword id="KW-0539">Nucleus</keyword>
<keyword id="KW-1185">Reference proteome</keyword>
<keyword id="KW-0879">Wnt signaling pathway</keyword>
<evidence type="ECO:0000250" key="1">
    <source>
        <dbReference type="UniProtKB" id="Q9NWU2"/>
    </source>
</evidence>
<evidence type="ECO:0000255" key="2">
    <source>
        <dbReference type="PROSITE-ProRule" id="PRU00058"/>
    </source>
</evidence>
<evidence type="ECO:0000255" key="3">
    <source>
        <dbReference type="PROSITE-ProRule" id="PRU00126"/>
    </source>
</evidence>
<evidence type="ECO:0000305" key="4"/>
<protein>
    <recommendedName>
        <fullName>Glucose-induced degradation protein 8 homolog</fullName>
    </recommendedName>
</protein>
<proteinExistence type="inferred from homology"/>